<dbReference type="EC" id="3.6.1.-" evidence="1"/>
<dbReference type="EMBL" id="BA000028">
    <property type="protein sequence ID" value="BAC12300.1"/>
    <property type="molecule type" value="Genomic_DNA"/>
</dbReference>
<dbReference type="RefSeq" id="WP_011064747.1">
    <property type="nucleotide sequence ID" value="NC_004193.1"/>
</dbReference>
<dbReference type="STRING" id="221109.gene:10732547"/>
<dbReference type="KEGG" id="oih:OB0344"/>
<dbReference type="eggNOG" id="COG1162">
    <property type="taxonomic scope" value="Bacteria"/>
</dbReference>
<dbReference type="HOGENOM" id="CLU_033617_0_1_9"/>
<dbReference type="OrthoDB" id="9809485at2"/>
<dbReference type="PhylomeDB" id="Q8ETB7"/>
<dbReference type="Proteomes" id="UP000000822">
    <property type="component" value="Chromosome"/>
</dbReference>
<dbReference type="GO" id="GO:0005737">
    <property type="term" value="C:cytoplasm"/>
    <property type="evidence" value="ECO:0007669"/>
    <property type="project" value="UniProtKB-SubCell"/>
</dbReference>
<dbReference type="GO" id="GO:0005525">
    <property type="term" value="F:GTP binding"/>
    <property type="evidence" value="ECO:0007669"/>
    <property type="project" value="UniProtKB-UniRule"/>
</dbReference>
<dbReference type="GO" id="GO:0003924">
    <property type="term" value="F:GTPase activity"/>
    <property type="evidence" value="ECO:0007669"/>
    <property type="project" value="UniProtKB-UniRule"/>
</dbReference>
<dbReference type="GO" id="GO:0046872">
    <property type="term" value="F:metal ion binding"/>
    <property type="evidence" value="ECO:0007669"/>
    <property type="project" value="UniProtKB-KW"/>
</dbReference>
<dbReference type="GO" id="GO:0019843">
    <property type="term" value="F:rRNA binding"/>
    <property type="evidence" value="ECO:0007669"/>
    <property type="project" value="UniProtKB-KW"/>
</dbReference>
<dbReference type="GO" id="GO:0042274">
    <property type="term" value="P:ribosomal small subunit biogenesis"/>
    <property type="evidence" value="ECO:0007669"/>
    <property type="project" value="UniProtKB-UniRule"/>
</dbReference>
<dbReference type="CDD" id="cd01854">
    <property type="entry name" value="YjeQ_EngC"/>
    <property type="match status" value="1"/>
</dbReference>
<dbReference type="Gene3D" id="3.40.50.300">
    <property type="entry name" value="P-loop containing nucleotide triphosphate hydrolases"/>
    <property type="match status" value="1"/>
</dbReference>
<dbReference type="Gene3D" id="1.10.40.50">
    <property type="entry name" value="Probable gtpase engc, domain 3"/>
    <property type="match status" value="1"/>
</dbReference>
<dbReference type="HAMAP" id="MF_01820">
    <property type="entry name" value="GTPase_RsgA"/>
    <property type="match status" value="1"/>
</dbReference>
<dbReference type="InterPro" id="IPR030378">
    <property type="entry name" value="G_CP_dom"/>
</dbReference>
<dbReference type="InterPro" id="IPR027417">
    <property type="entry name" value="P-loop_NTPase"/>
</dbReference>
<dbReference type="InterPro" id="IPR004881">
    <property type="entry name" value="Ribosome_biogen_GTPase_RsgA"/>
</dbReference>
<dbReference type="InterPro" id="IPR010914">
    <property type="entry name" value="RsgA_GTPase_dom"/>
</dbReference>
<dbReference type="NCBIfam" id="TIGR00157">
    <property type="entry name" value="ribosome small subunit-dependent GTPase A"/>
    <property type="match status" value="1"/>
</dbReference>
<dbReference type="PANTHER" id="PTHR32120">
    <property type="entry name" value="SMALL RIBOSOMAL SUBUNIT BIOGENESIS GTPASE RSGA"/>
    <property type="match status" value="1"/>
</dbReference>
<dbReference type="PANTHER" id="PTHR32120:SF10">
    <property type="entry name" value="SMALL RIBOSOMAL SUBUNIT BIOGENESIS GTPASE RSGA"/>
    <property type="match status" value="1"/>
</dbReference>
<dbReference type="Pfam" id="PF03193">
    <property type="entry name" value="RsgA_GTPase"/>
    <property type="match status" value="1"/>
</dbReference>
<dbReference type="SUPFAM" id="SSF52540">
    <property type="entry name" value="P-loop containing nucleoside triphosphate hydrolases"/>
    <property type="match status" value="1"/>
</dbReference>
<dbReference type="PROSITE" id="PS50936">
    <property type="entry name" value="ENGC_GTPASE"/>
    <property type="match status" value="1"/>
</dbReference>
<dbReference type="PROSITE" id="PS51721">
    <property type="entry name" value="G_CP"/>
    <property type="match status" value="1"/>
</dbReference>
<accession>Q8ETB7</accession>
<sequence>MNLNEFQQKYAYRKEINYDGQIDLLARVVMEQKERYILQTINGFKPAVVKGKMRHEAISREDYPAVGDWVVLQEKDFNDIVIIDQVLPRFSSIVRKVAGLRTDAQIVASNVTKVFIVISADEDLNERKLERYLTAVWESGASPHIVFSKVDLASDMDSIIEHADSIAFGIPLYKWNATNEEGKEDILANIHEDDSVVLIGSSGAGKSTLINALLTEKVLKTGSVREDDKRGRHTTTHRELFNLPTGGVIIDTPGMRELQLWTEDGDTLSHTFSDINHLIAECKFTDCKHDTEPDCAVKEALETGDLEEGRWNSYLKLQRELAYIERKQNAKLATEERKKWKKISMQQKKNR</sequence>
<protein>
    <recommendedName>
        <fullName evidence="1">Small ribosomal subunit biogenesis GTPase RsgA 1</fullName>
        <ecNumber evidence="1">3.6.1.-</ecNumber>
    </recommendedName>
</protein>
<comment type="function">
    <text evidence="1">One of several proteins that assist in the late maturation steps of the functional core of the 30S ribosomal subunit. Helps release RbfA from mature subunits. May play a role in the assembly of ribosomal proteins into the subunit. Circularly permuted GTPase that catalyzes slow GTP hydrolysis, GTPase activity is stimulated by the 30S ribosomal subunit.</text>
</comment>
<comment type="cofactor">
    <cofactor evidence="1">
        <name>Zn(2+)</name>
        <dbReference type="ChEBI" id="CHEBI:29105"/>
    </cofactor>
    <text evidence="1">Binds 1 zinc ion per subunit.</text>
</comment>
<comment type="subunit">
    <text evidence="1">Monomer. Associates with 30S ribosomal subunit, binds 16S rRNA.</text>
</comment>
<comment type="subcellular location">
    <subcellularLocation>
        <location evidence="1">Cytoplasm</location>
    </subcellularLocation>
</comment>
<comment type="similarity">
    <text evidence="1">Belongs to the TRAFAC class YlqF/YawG GTPase family. RsgA subfamily.</text>
</comment>
<proteinExistence type="inferred from homology"/>
<keyword id="KW-0963">Cytoplasm</keyword>
<keyword id="KW-0342">GTP-binding</keyword>
<keyword id="KW-0378">Hydrolase</keyword>
<keyword id="KW-0479">Metal-binding</keyword>
<keyword id="KW-0547">Nucleotide-binding</keyword>
<keyword id="KW-1185">Reference proteome</keyword>
<keyword id="KW-0690">Ribosome biogenesis</keyword>
<keyword id="KW-0694">RNA-binding</keyword>
<keyword id="KW-0699">rRNA-binding</keyword>
<keyword id="KW-0862">Zinc</keyword>
<reference key="1">
    <citation type="journal article" date="2002" name="Nucleic Acids Res.">
        <title>Genome sequence of Oceanobacillus iheyensis isolated from the Iheya Ridge and its unexpected adaptive capabilities to extreme environments.</title>
        <authorList>
            <person name="Takami H."/>
            <person name="Takaki Y."/>
            <person name="Uchiyama I."/>
        </authorList>
    </citation>
    <scope>NUCLEOTIDE SEQUENCE [LARGE SCALE GENOMIC DNA]</scope>
    <source>
        <strain>DSM 14371 / CIP 107618 / JCM 11309 / KCTC 3954 / HTE831</strain>
    </source>
</reference>
<feature type="chain" id="PRO_0000171502" description="Small ribosomal subunit biogenesis GTPase RsgA 1">
    <location>
        <begin position="1"/>
        <end position="351"/>
    </location>
</feature>
<feature type="domain" description="CP-type G" evidence="2">
    <location>
        <begin position="100"/>
        <end position="258"/>
    </location>
</feature>
<feature type="binding site" evidence="1">
    <location>
        <begin position="148"/>
        <end position="151"/>
    </location>
    <ligand>
        <name>GTP</name>
        <dbReference type="ChEBI" id="CHEBI:37565"/>
    </ligand>
</feature>
<feature type="binding site" evidence="1">
    <location>
        <begin position="200"/>
        <end position="208"/>
    </location>
    <ligand>
        <name>GTP</name>
        <dbReference type="ChEBI" id="CHEBI:37565"/>
    </ligand>
</feature>
<feature type="binding site" evidence="1">
    <location>
        <position position="282"/>
    </location>
    <ligand>
        <name>Zn(2+)</name>
        <dbReference type="ChEBI" id="CHEBI:29105"/>
    </ligand>
</feature>
<feature type="binding site" evidence="1">
    <location>
        <position position="287"/>
    </location>
    <ligand>
        <name>Zn(2+)</name>
        <dbReference type="ChEBI" id="CHEBI:29105"/>
    </ligand>
</feature>
<feature type="binding site" evidence="1">
    <location>
        <position position="289"/>
    </location>
    <ligand>
        <name>Zn(2+)</name>
        <dbReference type="ChEBI" id="CHEBI:29105"/>
    </ligand>
</feature>
<feature type="binding site" evidence="1">
    <location>
        <position position="295"/>
    </location>
    <ligand>
        <name>Zn(2+)</name>
        <dbReference type="ChEBI" id="CHEBI:29105"/>
    </ligand>
</feature>
<gene>
    <name evidence="1" type="primary">rsgA1</name>
    <name type="ordered locus">OB0344</name>
</gene>
<name>RSGA1_OCEIH</name>
<evidence type="ECO:0000255" key="1">
    <source>
        <dbReference type="HAMAP-Rule" id="MF_01820"/>
    </source>
</evidence>
<evidence type="ECO:0000255" key="2">
    <source>
        <dbReference type="PROSITE-ProRule" id="PRU01058"/>
    </source>
</evidence>
<organism>
    <name type="scientific">Oceanobacillus iheyensis (strain DSM 14371 / CIP 107618 / JCM 11309 / KCTC 3954 / HTE831)</name>
    <dbReference type="NCBI Taxonomy" id="221109"/>
    <lineage>
        <taxon>Bacteria</taxon>
        <taxon>Bacillati</taxon>
        <taxon>Bacillota</taxon>
        <taxon>Bacilli</taxon>
        <taxon>Bacillales</taxon>
        <taxon>Bacillaceae</taxon>
        <taxon>Oceanobacillus</taxon>
    </lineage>
</organism>